<dbReference type="EC" id="2.7.7.6" evidence="1"/>
<dbReference type="EMBL" id="AE008384">
    <property type="protein sequence ID" value="AAM32322.1"/>
    <property type="molecule type" value="Genomic_DNA"/>
</dbReference>
<dbReference type="SMR" id="P61934"/>
<dbReference type="KEGG" id="mma:MM_2626"/>
<dbReference type="PATRIC" id="fig|192952.21.peg.3020"/>
<dbReference type="eggNOG" id="arCOG04341">
    <property type="taxonomic scope" value="Archaea"/>
</dbReference>
<dbReference type="HOGENOM" id="CLU_179456_2_1_2"/>
<dbReference type="Proteomes" id="UP000000595">
    <property type="component" value="Chromosome"/>
</dbReference>
<dbReference type="GO" id="GO:0005737">
    <property type="term" value="C:cytoplasm"/>
    <property type="evidence" value="ECO:0007669"/>
    <property type="project" value="UniProtKB-SubCell"/>
</dbReference>
<dbReference type="GO" id="GO:0000428">
    <property type="term" value="C:DNA-directed RNA polymerase complex"/>
    <property type="evidence" value="ECO:0007669"/>
    <property type="project" value="UniProtKB-KW"/>
</dbReference>
<dbReference type="GO" id="GO:0003677">
    <property type="term" value="F:DNA binding"/>
    <property type="evidence" value="ECO:0007669"/>
    <property type="project" value="InterPro"/>
</dbReference>
<dbReference type="GO" id="GO:0003899">
    <property type="term" value="F:DNA-directed RNA polymerase activity"/>
    <property type="evidence" value="ECO:0007669"/>
    <property type="project" value="UniProtKB-UniRule"/>
</dbReference>
<dbReference type="GO" id="GO:0008270">
    <property type="term" value="F:zinc ion binding"/>
    <property type="evidence" value="ECO:0007669"/>
    <property type="project" value="UniProtKB-UniRule"/>
</dbReference>
<dbReference type="GO" id="GO:0006351">
    <property type="term" value="P:DNA-templated transcription"/>
    <property type="evidence" value="ECO:0007669"/>
    <property type="project" value="UniProtKB-UniRule"/>
</dbReference>
<dbReference type="Gene3D" id="2.20.28.30">
    <property type="entry name" value="RNA polymerase ii, chain L"/>
    <property type="match status" value="1"/>
</dbReference>
<dbReference type="HAMAP" id="MF_00615">
    <property type="entry name" value="RNApol_arch_Rpo12"/>
    <property type="match status" value="1"/>
</dbReference>
<dbReference type="InterPro" id="IPR006591">
    <property type="entry name" value="RNAP_P/RPABC4"/>
</dbReference>
<dbReference type="InterPro" id="IPR029040">
    <property type="entry name" value="RPABC4/Spt4"/>
</dbReference>
<dbReference type="InterPro" id="IPR023464">
    <property type="entry name" value="Rpo12"/>
</dbReference>
<dbReference type="NCBIfam" id="NF001606">
    <property type="entry name" value="PRK00398.1-3"/>
    <property type="match status" value="1"/>
</dbReference>
<dbReference type="Pfam" id="PF03604">
    <property type="entry name" value="Zn_ribbon_RPAB4"/>
    <property type="match status" value="1"/>
</dbReference>
<dbReference type="SMART" id="SM00659">
    <property type="entry name" value="RPOLCX"/>
    <property type="match status" value="1"/>
</dbReference>
<dbReference type="SUPFAM" id="SSF63393">
    <property type="entry name" value="RNA polymerase subunits"/>
    <property type="match status" value="1"/>
</dbReference>
<organism>
    <name type="scientific">Methanosarcina mazei (strain ATCC BAA-159 / DSM 3647 / Goe1 / Go1 / JCM 11833 / OCM 88)</name>
    <name type="common">Methanosarcina frisia</name>
    <dbReference type="NCBI Taxonomy" id="192952"/>
    <lineage>
        <taxon>Archaea</taxon>
        <taxon>Methanobacteriati</taxon>
        <taxon>Methanobacteriota</taxon>
        <taxon>Stenosarchaea group</taxon>
        <taxon>Methanomicrobia</taxon>
        <taxon>Methanosarcinales</taxon>
        <taxon>Methanosarcinaceae</taxon>
        <taxon>Methanosarcina</taxon>
    </lineage>
</organism>
<protein>
    <recommendedName>
        <fullName evidence="1">DNA-directed RNA polymerase subunit Rpo12</fullName>
        <ecNumber evidence="1">2.7.7.6</ecNumber>
    </recommendedName>
    <alternativeName>
        <fullName evidence="1">DNA-directed RNA polymerase subunit P</fullName>
    </alternativeName>
</protein>
<comment type="function">
    <text evidence="1">DNA-dependent RNA polymerase (RNAP) catalyzes the transcription of DNA into RNA using the four ribonucleoside triphosphates as substrates.</text>
</comment>
<comment type="catalytic activity">
    <reaction evidence="1">
        <text>RNA(n) + a ribonucleoside 5'-triphosphate = RNA(n+1) + diphosphate</text>
        <dbReference type="Rhea" id="RHEA:21248"/>
        <dbReference type="Rhea" id="RHEA-COMP:14527"/>
        <dbReference type="Rhea" id="RHEA-COMP:17342"/>
        <dbReference type="ChEBI" id="CHEBI:33019"/>
        <dbReference type="ChEBI" id="CHEBI:61557"/>
        <dbReference type="ChEBI" id="CHEBI:140395"/>
        <dbReference type="EC" id="2.7.7.6"/>
    </reaction>
</comment>
<comment type="cofactor">
    <cofactor evidence="1">
        <name>Zn(2+)</name>
        <dbReference type="ChEBI" id="CHEBI:29105"/>
    </cofactor>
    <text evidence="1">Binds 1 zinc ion.</text>
</comment>
<comment type="subunit">
    <text evidence="1">Part of the RNA polymerase complex.</text>
</comment>
<comment type="subcellular location">
    <subcellularLocation>
        <location evidence="1">Cytoplasm</location>
    </subcellularLocation>
</comment>
<comment type="similarity">
    <text evidence="1">Belongs to the archaeal Rpo12/eukaryotic RPC10 RNA polymerase subunit family.</text>
</comment>
<gene>
    <name evidence="1" type="primary">rpo12</name>
    <name evidence="1" type="synonym">rpoP</name>
    <name type="ordered locus">MM_2626</name>
</gene>
<keyword id="KW-0963">Cytoplasm</keyword>
<keyword id="KW-0240">DNA-directed RNA polymerase</keyword>
<keyword id="KW-0479">Metal-binding</keyword>
<keyword id="KW-0548">Nucleotidyltransferase</keyword>
<keyword id="KW-0804">Transcription</keyword>
<keyword id="KW-0808">Transferase</keyword>
<keyword id="KW-0862">Zinc</keyword>
<feature type="chain" id="PRO_0000159760" description="DNA-directed RNA polymerase subunit Rpo12">
    <location>
        <begin position="1"/>
        <end position="45"/>
    </location>
</feature>
<feature type="binding site" evidence="1">
    <location>
        <position position="8"/>
    </location>
    <ligand>
        <name>Zn(2+)</name>
        <dbReference type="ChEBI" id="CHEBI:29105"/>
    </ligand>
</feature>
<feature type="binding site" evidence="1">
    <location>
        <position position="23"/>
    </location>
    <ligand>
        <name>Zn(2+)</name>
        <dbReference type="ChEBI" id="CHEBI:29105"/>
    </ligand>
</feature>
<feature type="binding site" evidence="1">
    <location>
        <position position="26"/>
    </location>
    <ligand>
        <name>Zn(2+)</name>
        <dbReference type="ChEBI" id="CHEBI:29105"/>
    </ligand>
</feature>
<sequence>MGYKCTRCKQKVEIDYEYTGIRCPYCGHRILVKERPTTIKRIKAE</sequence>
<name>RPO12_METMA</name>
<accession>P61934</accession>
<accession>Q8TPX9</accession>
<evidence type="ECO:0000255" key="1">
    <source>
        <dbReference type="HAMAP-Rule" id="MF_00615"/>
    </source>
</evidence>
<reference key="1">
    <citation type="journal article" date="2002" name="J. Mol. Microbiol. Biotechnol.">
        <title>The genome of Methanosarcina mazei: evidence for lateral gene transfer between Bacteria and Archaea.</title>
        <authorList>
            <person name="Deppenmeier U."/>
            <person name="Johann A."/>
            <person name="Hartsch T."/>
            <person name="Merkl R."/>
            <person name="Schmitz R.A."/>
            <person name="Martinez-Arias R."/>
            <person name="Henne A."/>
            <person name="Wiezer A."/>
            <person name="Baeumer S."/>
            <person name="Jacobi C."/>
            <person name="Brueggemann H."/>
            <person name="Lienard T."/>
            <person name="Christmann A."/>
            <person name="Boemecke M."/>
            <person name="Steckel S."/>
            <person name="Bhattacharyya A."/>
            <person name="Lykidis A."/>
            <person name="Overbeek R."/>
            <person name="Klenk H.-P."/>
            <person name="Gunsalus R.P."/>
            <person name="Fritz H.-J."/>
            <person name="Gottschalk G."/>
        </authorList>
    </citation>
    <scope>NUCLEOTIDE SEQUENCE [LARGE SCALE GENOMIC DNA]</scope>
    <source>
        <strain>ATCC BAA-159 / DSM 3647 / Goe1 / Go1 / JCM 11833 / OCM 88</strain>
    </source>
</reference>
<proteinExistence type="inferred from homology"/>